<reference key="1">
    <citation type="journal article" date="2009" name="Science">
        <title>The genome sequence of taurine cattle: a window to ruminant biology and evolution.</title>
        <authorList>
            <consortium name="The bovine genome sequencing and analysis consortium"/>
        </authorList>
    </citation>
    <scope>NUCLEOTIDE SEQUENCE [LARGE SCALE GENOMIC DNA]</scope>
    <source>
        <strain>Hereford</strain>
    </source>
</reference>
<reference key="2">
    <citation type="submission" date="2007-07" db="EMBL/GenBank/DDBJ databases">
        <authorList>
            <consortium name="NIH - Mammalian Gene Collection (MGC) project"/>
        </authorList>
    </citation>
    <scope>NUCLEOTIDE SEQUENCE [LARGE SCALE MRNA] (ISOFORMS 1 AND 2)</scope>
    <source>
        <strain>Crossbred X Angus</strain>
        <strain>Hereford</strain>
        <tissue>Hypothalamus</tissue>
        <tissue>Liver</tissue>
    </source>
</reference>
<feature type="chain" id="PRO_0000353098" description="Zinc finger protein 474">
    <location>
        <begin position="1"/>
        <end position="454"/>
    </location>
</feature>
<feature type="zinc finger region" description="C2HC/C3H-type 1" evidence="1">
    <location>
        <begin position="91"/>
        <end position="120"/>
    </location>
</feature>
<feature type="zinc finger region" description="C2HC/C3H-type 2" evidence="1">
    <location>
        <begin position="162"/>
        <end position="191"/>
    </location>
</feature>
<feature type="zinc finger region" description="C2HC/C3H-type 3" evidence="1">
    <location>
        <begin position="218"/>
        <end position="247"/>
    </location>
</feature>
<feature type="zinc finger region" description="C2HC/C3H-type 4" evidence="1">
    <location>
        <begin position="281"/>
        <end position="310"/>
    </location>
</feature>
<feature type="zinc finger region" description="C2HC/C3H-type 5" evidence="1">
    <location>
        <begin position="352"/>
        <end position="381"/>
    </location>
</feature>
<feature type="zinc finger region" description="C2HC/C3H-type 6" evidence="1">
    <location>
        <begin position="425"/>
        <end position="454"/>
    </location>
</feature>
<feature type="region of interest" description="Disordered" evidence="2">
    <location>
        <begin position="48"/>
        <end position="85"/>
    </location>
</feature>
<feature type="region of interest" description="Disordered" evidence="2">
    <location>
        <begin position="125"/>
        <end position="146"/>
    </location>
</feature>
<feature type="region of interest" description="Disordered" evidence="2">
    <location>
        <begin position="256"/>
        <end position="282"/>
    </location>
</feature>
<feature type="region of interest" description="Disordered" evidence="2">
    <location>
        <begin position="299"/>
        <end position="345"/>
    </location>
</feature>
<feature type="compositionally biased region" description="Polar residues" evidence="2">
    <location>
        <begin position="66"/>
        <end position="79"/>
    </location>
</feature>
<feature type="binding site" evidence="1">
    <location>
        <position position="95"/>
    </location>
    <ligand>
        <name>Zn(2+)</name>
        <dbReference type="ChEBI" id="CHEBI:29105"/>
        <label>1</label>
    </ligand>
</feature>
<feature type="binding site" evidence="1">
    <location>
        <position position="98"/>
    </location>
    <ligand>
        <name>Zn(2+)</name>
        <dbReference type="ChEBI" id="CHEBI:29105"/>
        <label>1</label>
    </ligand>
</feature>
<feature type="binding site" evidence="1">
    <location>
        <position position="110"/>
    </location>
    <ligand>
        <name>Zn(2+)</name>
        <dbReference type="ChEBI" id="CHEBI:29105"/>
        <label>1</label>
    </ligand>
</feature>
<feature type="binding site" evidence="1">
    <location>
        <position position="114"/>
    </location>
    <ligand>
        <name>Zn(2+)</name>
        <dbReference type="ChEBI" id="CHEBI:29105"/>
        <label>1</label>
    </ligand>
</feature>
<feature type="binding site" evidence="1">
    <location>
        <position position="166"/>
    </location>
    <ligand>
        <name>Zn(2+)</name>
        <dbReference type="ChEBI" id="CHEBI:29105"/>
        <label>2</label>
    </ligand>
</feature>
<feature type="binding site" evidence="1">
    <location>
        <position position="169"/>
    </location>
    <ligand>
        <name>Zn(2+)</name>
        <dbReference type="ChEBI" id="CHEBI:29105"/>
        <label>2</label>
    </ligand>
</feature>
<feature type="binding site" evidence="1">
    <location>
        <position position="181"/>
    </location>
    <ligand>
        <name>Zn(2+)</name>
        <dbReference type="ChEBI" id="CHEBI:29105"/>
        <label>2</label>
    </ligand>
</feature>
<feature type="binding site" evidence="1">
    <location>
        <position position="185"/>
    </location>
    <ligand>
        <name>Zn(2+)</name>
        <dbReference type="ChEBI" id="CHEBI:29105"/>
        <label>2</label>
    </ligand>
</feature>
<feature type="binding site" evidence="1">
    <location>
        <position position="222"/>
    </location>
    <ligand>
        <name>Zn(2+)</name>
        <dbReference type="ChEBI" id="CHEBI:29105"/>
        <label>3</label>
    </ligand>
</feature>
<feature type="binding site" evidence="1">
    <location>
        <position position="225"/>
    </location>
    <ligand>
        <name>Zn(2+)</name>
        <dbReference type="ChEBI" id="CHEBI:29105"/>
        <label>3</label>
    </ligand>
</feature>
<feature type="binding site" evidence="1">
    <location>
        <position position="237"/>
    </location>
    <ligand>
        <name>Zn(2+)</name>
        <dbReference type="ChEBI" id="CHEBI:29105"/>
        <label>3</label>
    </ligand>
</feature>
<feature type="binding site" evidence="1">
    <location>
        <position position="241"/>
    </location>
    <ligand>
        <name>Zn(2+)</name>
        <dbReference type="ChEBI" id="CHEBI:29105"/>
        <label>3</label>
    </ligand>
</feature>
<feature type="binding site" evidence="1">
    <location>
        <position position="285"/>
    </location>
    <ligand>
        <name>Zn(2+)</name>
        <dbReference type="ChEBI" id="CHEBI:29105"/>
        <label>4</label>
    </ligand>
</feature>
<feature type="binding site" evidence="1">
    <location>
        <position position="288"/>
    </location>
    <ligand>
        <name>Zn(2+)</name>
        <dbReference type="ChEBI" id="CHEBI:29105"/>
        <label>4</label>
    </ligand>
</feature>
<feature type="binding site" evidence="1">
    <location>
        <position position="300"/>
    </location>
    <ligand>
        <name>Zn(2+)</name>
        <dbReference type="ChEBI" id="CHEBI:29105"/>
        <label>4</label>
    </ligand>
</feature>
<feature type="binding site" evidence="1">
    <location>
        <position position="304"/>
    </location>
    <ligand>
        <name>Zn(2+)</name>
        <dbReference type="ChEBI" id="CHEBI:29105"/>
        <label>4</label>
    </ligand>
</feature>
<feature type="binding site" evidence="1">
    <location>
        <position position="356"/>
    </location>
    <ligand>
        <name>Zn(2+)</name>
        <dbReference type="ChEBI" id="CHEBI:29105"/>
        <label>5</label>
    </ligand>
</feature>
<feature type="binding site" evidence="1">
    <location>
        <position position="359"/>
    </location>
    <ligand>
        <name>Zn(2+)</name>
        <dbReference type="ChEBI" id="CHEBI:29105"/>
        <label>5</label>
    </ligand>
</feature>
<feature type="binding site" evidence="1">
    <location>
        <position position="371"/>
    </location>
    <ligand>
        <name>Zn(2+)</name>
        <dbReference type="ChEBI" id="CHEBI:29105"/>
        <label>5</label>
    </ligand>
</feature>
<feature type="binding site" evidence="1">
    <location>
        <position position="375"/>
    </location>
    <ligand>
        <name>Zn(2+)</name>
        <dbReference type="ChEBI" id="CHEBI:29105"/>
        <label>5</label>
    </ligand>
</feature>
<feature type="binding site" evidence="1">
    <location>
        <position position="429"/>
    </location>
    <ligand>
        <name>Zn(2+)</name>
        <dbReference type="ChEBI" id="CHEBI:29105"/>
        <label>6</label>
    </ligand>
</feature>
<feature type="binding site" evidence="1">
    <location>
        <position position="432"/>
    </location>
    <ligand>
        <name>Zn(2+)</name>
        <dbReference type="ChEBI" id="CHEBI:29105"/>
        <label>6</label>
    </ligand>
</feature>
<feature type="binding site" evidence="1">
    <location>
        <position position="444"/>
    </location>
    <ligand>
        <name>Zn(2+)</name>
        <dbReference type="ChEBI" id="CHEBI:29105"/>
        <label>6</label>
    </ligand>
</feature>
<feature type="binding site" evidence="1">
    <location>
        <position position="448"/>
    </location>
    <ligand>
        <name>Zn(2+)</name>
        <dbReference type="ChEBI" id="CHEBI:29105"/>
        <label>6</label>
    </ligand>
</feature>
<feature type="splice variant" id="VSP_035630" description="In isoform 2." evidence="3">
    <location>
        <begin position="1"/>
        <end position="346"/>
    </location>
</feature>
<proteinExistence type="evidence at transcript level"/>
<protein>
    <recommendedName>
        <fullName>Zinc finger protein 474</fullName>
    </recommendedName>
</protein>
<name>ZN474_BOVIN</name>
<gene>
    <name type="primary">ZNF474</name>
</gene>
<comment type="cofactor">
    <cofactor evidence="1">
        <name>Zn(2+)</name>
        <dbReference type="ChEBI" id="CHEBI:29105"/>
    </cofactor>
</comment>
<comment type="alternative products">
    <event type="alternative splicing"/>
    <isoform>
        <id>A6QQM4-1</id>
        <name>1</name>
        <sequence type="displayed"/>
    </isoform>
    <isoform>
        <id>A6QQM4-2</id>
        <name>2</name>
        <sequence type="described" ref="VSP_035630"/>
    </isoform>
</comment>
<evidence type="ECO:0000255" key="1">
    <source>
        <dbReference type="PROSITE-ProRule" id="PRU01371"/>
    </source>
</evidence>
<evidence type="ECO:0000256" key="2">
    <source>
        <dbReference type="SAM" id="MobiDB-lite"/>
    </source>
</evidence>
<evidence type="ECO:0000303" key="3">
    <source ref="2"/>
</evidence>
<accession>A6QQM4</accession>
<accession>Q32P70</accession>
<keyword id="KW-0025">Alternative splicing</keyword>
<keyword id="KW-0479">Metal-binding</keyword>
<keyword id="KW-1185">Reference proteome</keyword>
<keyword id="KW-0677">Repeat</keyword>
<keyword id="KW-0862">Zinc</keyword>
<keyword id="KW-0863">Zinc-finger</keyword>
<organism>
    <name type="scientific">Bos taurus</name>
    <name type="common">Bovine</name>
    <dbReference type="NCBI Taxonomy" id="9913"/>
    <lineage>
        <taxon>Eukaryota</taxon>
        <taxon>Metazoa</taxon>
        <taxon>Chordata</taxon>
        <taxon>Craniata</taxon>
        <taxon>Vertebrata</taxon>
        <taxon>Euteleostomi</taxon>
        <taxon>Mammalia</taxon>
        <taxon>Eutheria</taxon>
        <taxon>Laurasiatheria</taxon>
        <taxon>Artiodactyla</taxon>
        <taxon>Ruminantia</taxon>
        <taxon>Pecora</taxon>
        <taxon>Bovidae</taxon>
        <taxon>Bovinae</taxon>
        <taxon>Bos</taxon>
    </lineage>
</organism>
<dbReference type="EMBL" id="AAFC03049185">
    <property type="status" value="NOT_ANNOTATED_CDS"/>
    <property type="molecule type" value="Genomic_DNA"/>
</dbReference>
<dbReference type="EMBL" id="BC108236">
    <property type="protein sequence ID" value="AAI08237.1"/>
    <property type="molecule type" value="mRNA"/>
</dbReference>
<dbReference type="EMBL" id="BC149901">
    <property type="protein sequence ID" value="AAI49902.1"/>
    <property type="molecule type" value="mRNA"/>
</dbReference>
<dbReference type="RefSeq" id="NP_001032567.1">
    <molecule id="A6QQM4-2"/>
    <property type="nucleotide sequence ID" value="NM_001037490.1"/>
</dbReference>
<dbReference type="RefSeq" id="NP_001098482.1">
    <property type="nucleotide sequence ID" value="NM_001105012.2"/>
</dbReference>
<dbReference type="FunCoup" id="A6QQM4">
    <property type="interactions" value="14"/>
</dbReference>
<dbReference type="STRING" id="9913.ENSBTAP00000073374"/>
<dbReference type="PaxDb" id="9913-ENSBTAP00000049829"/>
<dbReference type="GeneID" id="139029563"/>
<dbReference type="KEGG" id="bta:781423"/>
<dbReference type="CTD" id="100505841"/>
<dbReference type="VEuPathDB" id="HostDB:ENSBTAG00000019881"/>
<dbReference type="eggNOG" id="ENOG502QWEF">
    <property type="taxonomic scope" value="Eukaryota"/>
</dbReference>
<dbReference type="HOGENOM" id="CLU_156078_0_0_1"/>
<dbReference type="InParanoid" id="A6QQM4"/>
<dbReference type="OMA" id="RSCKTQP"/>
<dbReference type="OrthoDB" id="265955at2759"/>
<dbReference type="Proteomes" id="UP000009136">
    <property type="component" value="Chromosome 7"/>
</dbReference>
<dbReference type="Bgee" id="ENSBTAG00000019881">
    <property type="expression patterns" value="Expressed in semen and 62 other cell types or tissues"/>
</dbReference>
<dbReference type="GO" id="GO:0008270">
    <property type="term" value="F:zinc ion binding"/>
    <property type="evidence" value="ECO:0007669"/>
    <property type="project" value="UniProtKB-KW"/>
</dbReference>
<dbReference type="Gene3D" id="3.30.160.60">
    <property type="entry name" value="Classic Zinc Finger"/>
    <property type="match status" value="6"/>
</dbReference>
<dbReference type="InterPro" id="IPR026319">
    <property type="entry name" value="ZC2HC1A/B-like"/>
</dbReference>
<dbReference type="InterPro" id="IPR049899">
    <property type="entry name" value="Znf_C2HC_C3H"/>
</dbReference>
<dbReference type="PANTHER" id="PTHR13555">
    <property type="entry name" value="C2H2 ZINC FINGER CGI-62-RELATED"/>
    <property type="match status" value="1"/>
</dbReference>
<dbReference type="PANTHER" id="PTHR13555:SF68">
    <property type="entry name" value="ZINC FINGER PROTEIN 474"/>
    <property type="match status" value="1"/>
</dbReference>
<dbReference type="Pfam" id="PF13913">
    <property type="entry name" value="zf-C2HC_2"/>
    <property type="match status" value="6"/>
</dbReference>
<dbReference type="PROSITE" id="PS52027">
    <property type="entry name" value="ZF_C2HC_C3H"/>
    <property type="match status" value="6"/>
</dbReference>
<sequence length="454" mass="51182">MEREEEKRVSTLQQSFHHSKEPTFLINQAVLFGESHSSFLPEIERDNRGEKIKTNPRKNRPGTVILSKQSSRRIMSGSQPRPPVIPSRRPGFRVCYICGREFGSQSLGIHEPQCLEKWRVENSKLPKHLRRPEPSKPPPFSGSGSYSLQAANEAAFQSSQAQLLPCETCGRTFLPDRLLVHQRSCKQKVEGPRAPSLDRSDDLAGLKKVSSGITTRPRTVICYICGREFGTLSLPIHEPKCLEKWKVENDRLPREFRQPLPQKPQPLLTGQPKHAGPRQGQLVSCPNCSQTFAPDRLPVHQRSCKAQPSGPKVQDLTLGSRGGLKESTNPKPQRNMAAPPVTDKPKMIRRPPTIVCYICGREYGTKSIAIHEPQCLKKWHNENNLLPKELRRPEPKKPEVRTITAKGFYDLDALNEAAWTSAQSQLVPCNICGRTFLPDRLIVHQRSCKPKVAK</sequence>